<protein>
    <recommendedName>
        <fullName>Glutathione peroxidase homolog</fullName>
        <ecNumber>1.11.1.9</ecNumber>
    </recommendedName>
    <alternativeName>
        <fullName>Water stress-responsive protein 8/9</fullName>
    </alternativeName>
</protein>
<sequence length="17" mass="1943">YKDQGLEILAFPCNQFG</sequence>
<accession>P81087</accession>
<dbReference type="EC" id="1.11.1.9"/>
<dbReference type="PeroxiBase" id="3739">
    <property type="entry name" value="PpGPx06"/>
</dbReference>
<dbReference type="GO" id="GO:0004602">
    <property type="term" value="F:glutathione peroxidase activity"/>
    <property type="evidence" value="ECO:0007669"/>
    <property type="project" value="UniProtKB-EC"/>
</dbReference>
<dbReference type="GO" id="GO:0006979">
    <property type="term" value="P:response to oxidative stress"/>
    <property type="evidence" value="ECO:0007669"/>
    <property type="project" value="InterPro"/>
</dbReference>
<dbReference type="Gene3D" id="3.40.30.10">
    <property type="entry name" value="Glutaredoxin"/>
    <property type="match status" value="1"/>
</dbReference>
<dbReference type="InterPro" id="IPR000889">
    <property type="entry name" value="Glutathione_peroxidase"/>
</dbReference>
<dbReference type="InterPro" id="IPR029760">
    <property type="entry name" value="GPX_CS"/>
</dbReference>
<dbReference type="PROSITE" id="PS00763">
    <property type="entry name" value="GLUTATHIONE_PEROXID_2"/>
    <property type="match status" value="1"/>
</dbReference>
<dbReference type="PROSITE" id="PS51355">
    <property type="entry name" value="GLUTATHIONE_PEROXID_3"/>
    <property type="match status" value="1"/>
</dbReference>
<evidence type="ECO:0000305" key="1"/>
<proteinExistence type="evidence at protein level"/>
<organism>
    <name type="scientific">Pinus pinaster</name>
    <name type="common">Maritime pine</name>
    <dbReference type="NCBI Taxonomy" id="71647"/>
    <lineage>
        <taxon>Eukaryota</taxon>
        <taxon>Viridiplantae</taxon>
        <taxon>Streptophyta</taxon>
        <taxon>Embryophyta</taxon>
        <taxon>Tracheophyta</taxon>
        <taxon>Spermatophyta</taxon>
        <taxon>Pinopsida</taxon>
        <taxon>Pinidae</taxon>
        <taxon>Conifers I</taxon>
        <taxon>Pinales</taxon>
        <taxon>Pinaceae</taxon>
        <taxon>Pinus</taxon>
        <taxon>Pinus subgen. Pinus</taxon>
    </lineage>
</organism>
<name>GPX4_PINPS</name>
<comment type="catalytic activity">
    <reaction>
        <text>2 glutathione + H2O2 = glutathione disulfide + 2 H2O</text>
        <dbReference type="Rhea" id="RHEA:16833"/>
        <dbReference type="ChEBI" id="CHEBI:15377"/>
        <dbReference type="ChEBI" id="CHEBI:16240"/>
        <dbReference type="ChEBI" id="CHEBI:57925"/>
        <dbReference type="ChEBI" id="CHEBI:58297"/>
        <dbReference type="EC" id="1.11.1.9"/>
    </reaction>
</comment>
<comment type="induction">
    <text>By water stress.</text>
</comment>
<comment type="miscellaneous">
    <text>On the 2D-gel the determined pI of this protein is: 5.6 to 6.7, its MW is: 20 to 23 kDa.</text>
</comment>
<comment type="similarity">
    <text evidence="1">Belongs to the glutathione peroxidase family.</text>
</comment>
<keyword id="KW-0903">Direct protein sequencing</keyword>
<keyword id="KW-0560">Oxidoreductase</keyword>
<keyword id="KW-0575">Peroxidase</keyword>
<keyword id="KW-0346">Stress response</keyword>
<feature type="chain" id="PRO_0000066634" description="Glutathione peroxidase homolog">
    <location>
        <begin position="1" status="less than"/>
        <end position="17" status="greater than"/>
    </location>
</feature>
<feature type="non-terminal residue">
    <location>
        <position position="1"/>
    </location>
</feature>
<feature type="non-terminal residue">
    <location>
        <position position="17"/>
    </location>
</feature>
<reference key="1">
    <citation type="journal article" date="1998" name="Plant Mol. Biol.">
        <title>Water-deficit-responsive proteins in maritime pine.</title>
        <authorList>
            <person name="Costa P."/>
            <person name="Bahrman N."/>
            <person name="Frigerio J.-M."/>
            <person name="Kremer A."/>
            <person name="Plomion C."/>
        </authorList>
    </citation>
    <scope>PROTEIN SEQUENCE</scope>
    <source>
        <tissue>Needle</tissue>
    </source>
</reference>
<reference key="2">
    <citation type="journal article" date="1999" name="Electrophoresis">
        <title>Separation and characterization of needle and xylem maritime pine proteins.</title>
        <authorList>
            <person name="Costa P."/>
            <person name="Pionneau C."/>
            <person name="Bauw G."/>
            <person name="Dubos C."/>
            <person name="Bahrman N."/>
            <person name="Kremer A."/>
            <person name="Frigerio J.-M."/>
            <person name="Plomion C."/>
        </authorList>
    </citation>
    <scope>PROTEIN SEQUENCE</scope>
    <source>
        <tissue>Needle</tissue>
    </source>
</reference>